<reference key="1">
    <citation type="journal article" date="2007" name="PLoS Genet.">
        <title>Patterns and implications of gene gain and loss in the evolution of Prochlorococcus.</title>
        <authorList>
            <person name="Kettler G.C."/>
            <person name="Martiny A.C."/>
            <person name="Huang K."/>
            <person name="Zucker J."/>
            <person name="Coleman M.L."/>
            <person name="Rodrigue S."/>
            <person name="Chen F."/>
            <person name="Lapidus A."/>
            <person name="Ferriera S."/>
            <person name="Johnson J."/>
            <person name="Steglich C."/>
            <person name="Church G.M."/>
            <person name="Richardson P."/>
            <person name="Chisholm S.W."/>
        </authorList>
    </citation>
    <scope>NUCLEOTIDE SEQUENCE [LARGE SCALE GENOMIC DNA]</scope>
    <source>
        <strain>NATL1A</strain>
    </source>
</reference>
<proteinExistence type="inferred from homology"/>
<name>METK_PROM1</name>
<feature type="chain" id="PRO_0000302962" description="S-adenosylmethionine synthase">
    <location>
        <begin position="1"/>
        <end position="409"/>
    </location>
</feature>
<feature type="region of interest" description="Flexible loop" evidence="1">
    <location>
        <begin position="100"/>
        <end position="110"/>
    </location>
</feature>
<feature type="binding site" description="in other chain" evidence="1">
    <location>
        <position position="15"/>
    </location>
    <ligand>
        <name>ATP</name>
        <dbReference type="ChEBI" id="CHEBI:30616"/>
        <note>ligand shared between two neighboring subunits</note>
    </ligand>
</feature>
<feature type="binding site" evidence="1">
    <location>
        <position position="17"/>
    </location>
    <ligand>
        <name>Mg(2+)</name>
        <dbReference type="ChEBI" id="CHEBI:18420"/>
    </ligand>
</feature>
<feature type="binding site" evidence="1">
    <location>
        <position position="43"/>
    </location>
    <ligand>
        <name>K(+)</name>
        <dbReference type="ChEBI" id="CHEBI:29103"/>
    </ligand>
</feature>
<feature type="binding site" description="in other chain" evidence="1">
    <location>
        <position position="56"/>
    </location>
    <ligand>
        <name>L-methionine</name>
        <dbReference type="ChEBI" id="CHEBI:57844"/>
        <note>ligand shared between two neighboring subunits</note>
    </ligand>
</feature>
<feature type="binding site" description="in other chain" evidence="1">
    <location>
        <position position="100"/>
    </location>
    <ligand>
        <name>L-methionine</name>
        <dbReference type="ChEBI" id="CHEBI:57844"/>
        <note>ligand shared between two neighboring subunits</note>
    </ligand>
</feature>
<feature type="binding site" description="in other chain" evidence="1">
    <location>
        <begin position="171"/>
        <end position="173"/>
    </location>
    <ligand>
        <name>ATP</name>
        <dbReference type="ChEBI" id="CHEBI:30616"/>
        <note>ligand shared between two neighboring subunits</note>
    </ligand>
</feature>
<feature type="binding site" description="in other chain" evidence="1">
    <location>
        <begin position="248"/>
        <end position="249"/>
    </location>
    <ligand>
        <name>ATP</name>
        <dbReference type="ChEBI" id="CHEBI:30616"/>
        <note>ligand shared between two neighboring subunits</note>
    </ligand>
</feature>
<feature type="binding site" evidence="1">
    <location>
        <position position="257"/>
    </location>
    <ligand>
        <name>ATP</name>
        <dbReference type="ChEBI" id="CHEBI:30616"/>
        <note>ligand shared between two neighboring subunits</note>
    </ligand>
</feature>
<feature type="binding site" evidence="1">
    <location>
        <position position="257"/>
    </location>
    <ligand>
        <name>L-methionine</name>
        <dbReference type="ChEBI" id="CHEBI:57844"/>
        <note>ligand shared between two neighboring subunits</note>
    </ligand>
</feature>
<feature type="binding site" description="in other chain" evidence="1">
    <location>
        <begin position="263"/>
        <end position="264"/>
    </location>
    <ligand>
        <name>ATP</name>
        <dbReference type="ChEBI" id="CHEBI:30616"/>
        <note>ligand shared between two neighboring subunits</note>
    </ligand>
</feature>
<feature type="binding site" evidence="1">
    <location>
        <position position="280"/>
    </location>
    <ligand>
        <name>ATP</name>
        <dbReference type="ChEBI" id="CHEBI:30616"/>
        <note>ligand shared between two neighboring subunits</note>
    </ligand>
</feature>
<feature type="binding site" evidence="1">
    <location>
        <position position="284"/>
    </location>
    <ligand>
        <name>ATP</name>
        <dbReference type="ChEBI" id="CHEBI:30616"/>
        <note>ligand shared between two neighboring subunits</note>
    </ligand>
</feature>
<feature type="binding site" description="in other chain" evidence="1">
    <location>
        <position position="288"/>
    </location>
    <ligand>
        <name>L-methionine</name>
        <dbReference type="ChEBI" id="CHEBI:57844"/>
        <note>ligand shared between two neighboring subunits</note>
    </ligand>
</feature>
<dbReference type="EC" id="2.5.1.6" evidence="1"/>
<dbReference type="EMBL" id="CP000553">
    <property type="protein sequence ID" value="ABM74964.1"/>
    <property type="molecule type" value="Genomic_DNA"/>
</dbReference>
<dbReference type="RefSeq" id="WP_011823161.1">
    <property type="nucleotide sequence ID" value="NC_008819.1"/>
</dbReference>
<dbReference type="SMR" id="A2C0F4"/>
<dbReference type="KEGG" id="pme:NATL1_04001"/>
<dbReference type="eggNOG" id="COG0192">
    <property type="taxonomic scope" value="Bacteria"/>
</dbReference>
<dbReference type="HOGENOM" id="CLU_041802_1_1_3"/>
<dbReference type="UniPathway" id="UPA00315">
    <property type="reaction ID" value="UER00080"/>
</dbReference>
<dbReference type="Proteomes" id="UP000002592">
    <property type="component" value="Chromosome"/>
</dbReference>
<dbReference type="GO" id="GO:0005737">
    <property type="term" value="C:cytoplasm"/>
    <property type="evidence" value="ECO:0007669"/>
    <property type="project" value="UniProtKB-SubCell"/>
</dbReference>
<dbReference type="GO" id="GO:0005524">
    <property type="term" value="F:ATP binding"/>
    <property type="evidence" value="ECO:0007669"/>
    <property type="project" value="UniProtKB-UniRule"/>
</dbReference>
<dbReference type="GO" id="GO:0000287">
    <property type="term" value="F:magnesium ion binding"/>
    <property type="evidence" value="ECO:0007669"/>
    <property type="project" value="UniProtKB-UniRule"/>
</dbReference>
<dbReference type="GO" id="GO:0004478">
    <property type="term" value="F:methionine adenosyltransferase activity"/>
    <property type="evidence" value="ECO:0007669"/>
    <property type="project" value="UniProtKB-UniRule"/>
</dbReference>
<dbReference type="GO" id="GO:0006730">
    <property type="term" value="P:one-carbon metabolic process"/>
    <property type="evidence" value="ECO:0007669"/>
    <property type="project" value="UniProtKB-KW"/>
</dbReference>
<dbReference type="GO" id="GO:0006556">
    <property type="term" value="P:S-adenosylmethionine biosynthetic process"/>
    <property type="evidence" value="ECO:0007669"/>
    <property type="project" value="UniProtKB-UniRule"/>
</dbReference>
<dbReference type="CDD" id="cd18079">
    <property type="entry name" value="S-AdoMet_synt"/>
    <property type="match status" value="1"/>
</dbReference>
<dbReference type="FunFam" id="3.30.300.10:FF:000003">
    <property type="entry name" value="S-adenosylmethionine synthase"/>
    <property type="match status" value="1"/>
</dbReference>
<dbReference type="Gene3D" id="3.30.300.10">
    <property type="match status" value="3"/>
</dbReference>
<dbReference type="HAMAP" id="MF_00086">
    <property type="entry name" value="S_AdoMet_synth1"/>
    <property type="match status" value="1"/>
</dbReference>
<dbReference type="InterPro" id="IPR022631">
    <property type="entry name" value="ADOMET_SYNTHASE_CS"/>
</dbReference>
<dbReference type="InterPro" id="IPR022630">
    <property type="entry name" value="S-AdoMet_synt_C"/>
</dbReference>
<dbReference type="InterPro" id="IPR022629">
    <property type="entry name" value="S-AdoMet_synt_central"/>
</dbReference>
<dbReference type="InterPro" id="IPR022628">
    <property type="entry name" value="S-AdoMet_synt_N"/>
</dbReference>
<dbReference type="InterPro" id="IPR002133">
    <property type="entry name" value="S-AdoMet_synthetase"/>
</dbReference>
<dbReference type="InterPro" id="IPR022636">
    <property type="entry name" value="S-AdoMet_synthetase_sfam"/>
</dbReference>
<dbReference type="NCBIfam" id="TIGR01034">
    <property type="entry name" value="metK"/>
    <property type="match status" value="1"/>
</dbReference>
<dbReference type="PANTHER" id="PTHR11964">
    <property type="entry name" value="S-ADENOSYLMETHIONINE SYNTHETASE"/>
    <property type="match status" value="1"/>
</dbReference>
<dbReference type="Pfam" id="PF02773">
    <property type="entry name" value="S-AdoMet_synt_C"/>
    <property type="match status" value="1"/>
</dbReference>
<dbReference type="Pfam" id="PF02772">
    <property type="entry name" value="S-AdoMet_synt_M"/>
    <property type="match status" value="1"/>
</dbReference>
<dbReference type="Pfam" id="PF00438">
    <property type="entry name" value="S-AdoMet_synt_N"/>
    <property type="match status" value="1"/>
</dbReference>
<dbReference type="PIRSF" id="PIRSF000497">
    <property type="entry name" value="MAT"/>
    <property type="match status" value="1"/>
</dbReference>
<dbReference type="SUPFAM" id="SSF55973">
    <property type="entry name" value="S-adenosylmethionine synthetase"/>
    <property type="match status" value="3"/>
</dbReference>
<dbReference type="PROSITE" id="PS00376">
    <property type="entry name" value="ADOMET_SYNTHASE_1"/>
    <property type="match status" value="1"/>
</dbReference>
<dbReference type="PROSITE" id="PS00377">
    <property type="entry name" value="ADOMET_SYNTHASE_2"/>
    <property type="match status" value="1"/>
</dbReference>
<comment type="function">
    <text evidence="1">Catalyzes the formation of S-adenosylmethionine (AdoMet) from methionine and ATP. The overall synthetic reaction is composed of two sequential steps, AdoMet formation and the subsequent tripolyphosphate hydrolysis which occurs prior to release of AdoMet from the enzyme.</text>
</comment>
<comment type="catalytic activity">
    <reaction evidence="1">
        <text>L-methionine + ATP + H2O = S-adenosyl-L-methionine + phosphate + diphosphate</text>
        <dbReference type="Rhea" id="RHEA:21080"/>
        <dbReference type="ChEBI" id="CHEBI:15377"/>
        <dbReference type="ChEBI" id="CHEBI:30616"/>
        <dbReference type="ChEBI" id="CHEBI:33019"/>
        <dbReference type="ChEBI" id="CHEBI:43474"/>
        <dbReference type="ChEBI" id="CHEBI:57844"/>
        <dbReference type="ChEBI" id="CHEBI:59789"/>
        <dbReference type="EC" id="2.5.1.6"/>
    </reaction>
</comment>
<comment type="cofactor">
    <cofactor evidence="1">
        <name>Mg(2+)</name>
        <dbReference type="ChEBI" id="CHEBI:18420"/>
    </cofactor>
    <text evidence="1">Binds 2 divalent ions per subunit.</text>
</comment>
<comment type="cofactor">
    <cofactor evidence="1">
        <name>K(+)</name>
        <dbReference type="ChEBI" id="CHEBI:29103"/>
    </cofactor>
    <text evidence="1">Binds 1 potassium ion per subunit.</text>
</comment>
<comment type="pathway">
    <text evidence="1">Amino-acid biosynthesis; S-adenosyl-L-methionine biosynthesis; S-adenosyl-L-methionine from L-methionine: step 1/1.</text>
</comment>
<comment type="subunit">
    <text evidence="1">Homotetramer; dimer of dimers.</text>
</comment>
<comment type="subcellular location">
    <subcellularLocation>
        <location evidence="1">Cytoplasm</location>
    </subcellularLocation>
</comment>
<comment type="similarity">
    <text evidence="1">Belongs to the AdoMet synthase family.</text>
</comment>
<sequence>MSRYVFTSESVTEGHPDKICDQVSDAVLDACLSEDPTSRVACEAVVNTGLCLITGEITSKAEVDFNKLVREVIKSIGYRSASDGGFDANSCAVLVALDQQSSDIAQGVNEAEDHSTDPLDQVGAGDQGIMFGFACDETPELMPLPISLAHRLARRLALVRHQQLIDYLLPDGKTQVSVSYENGVPCSIDTILISTQHKSEVDGITLEEEIQKRIAKDLWKFVVEPATEDLPLKPAKESTRFLVNPTGKFVIGGPQGDAGLTGRKIIVDTYGGYARHGGGAFSGKDPTKVDRSAAYAARFVAKALVAANLAKKVEVQLSYAIGVAKPISILVDSFGTGKVSDSELTQLVQDQFDLRPGAIIKAFDLQNLPSVRGGRFYRDTAAYGHFGRTDILLPWEDVSQKAKELSLLK</sequence>
<gene>
    <name evidence="1" type="primary">metK</name>
    <name type="ordered locus">NATL1_04001</name>
</gene>
<evidence type="ECO:0000255" key="1">
    <source>
        <dbReference type="HAMAP-Rule" id="MF_00086"/>
    </source>
</evidence>
<protein>
    <recommendedName>
        <fullName evidence="1">S-adenosylmethionine synthase</fullName>
        <shortName evidence="1">AdoMet synthase</shortName>
        <ecNumber evidence="1">2.5.1.6</ecNumber>
    </recommendedName>
    <alternativeName>
        <fullName evidence="1">MAT</fullName>
    </alternativeName>
    <alternativeName>
        <fullName evidence="1">Methionine adenosyltransferase</fullName>
    </alternativeName>
</protein>
<keyword id="KW-0067">ATP-binding</keyword>
<keyword id="KW-0963">Cytoplasm</keyword>
<keyword id="KW-0460">Magnesium</keyword>
<keyword id="KW-0479">Metal-binding</keyword>
<keyword id="KW-0547">Nucleotide-binding</keyword>
<keyword id="KW-0554">One-carbon metabolism</keyword>
<keyword id="KW-0630">Potassium</keyword>
<keyword id="KW-0808">Transferase</keyword>
<accession>A2C0F4</accession>
<organism>
    <name type="scientific">Prochlorococcus marinus (strain NATL1A)</name>
    <dbReference type="NCBI Taxonomy" id="167555"/>
    <lineage>
        <taxon>Bacteria</taxon>
        <taxon>Bacillati</taxon>
        <taxon>Cyanobacteriota</taxon>
        <taxon>Cyanophyceae</taxon>
        <taxon>Synechococcales</taxon>
        <taxon>Prochlorococcaceae</taxon>
        <taxon>Prochlorococcus</taxon>
    </lineage>
</organism>